<keyword id="KW-0007">Acetylation</keyword>
<keyword id="KW-0037">Angiogenesis</keyword>
<keyword id="KW-0067">ATP-binding</keyword>
<keyword id="KW-1003">Cell membrane</keyword>
<keyword id="KW-0963">Cytoplasm</keyword>
<keyword id="KW-0256">Endoplasmic reticulum</keyword>
<keyword id="KW-0436">Ligase</keyword>
<keyword id="KW-0449">Lipoprotein</keyword>
<keyword id="KW-0460">Magnesium</keyword>
<keyword id="KW-0464">Manganese</keyword>
<keyword id="KW-0472">Membrane</keyword>
<keyword id="KW-0479">Metal-binding</keyword>
<keyword id="KW-0492">Microsome</keyword>
<keyword id="KW-0496">Mitochondrion</keyword>
<keyword id="KW-0547">Nucleotide-binding</keyword>
<keyword id="KW-0564">Palmitate</keyword>
<keyword id="KW-0597">Phosphoprotein</keyword>
<keyword id="KW-1185">Reference proteome</keyword>
<keyword id="KW-0808">Transferase</keyword>
<keyword id="KW-0832">Ubl conjugation</keyword>
<accession>P46410</accession>
<sequence length="373" mass="42030">MATSASSHLNKGIKQVYMSLPQGEKVQAMYIWIDGTGEGLRCKTRTLDSEPKCIEELPEWNFDGSSTFQSEGSNSDMYLVPAAMFRDPFRKDPNKLVFCEVFKYNRKPAETNLRHTCKRIMDMVSNQHPWFGMEQEYTLMGTDGHPFGWPSNGFPGPQGPYYCGVGADKAYGRDIVEAHYRACLYAGIKIGGTNAEVMPAQWEFQIGPCEGIDMGDHLWVARFILHRVCEDFGVIATFDPKPIPGNWNGAGCHTNFSTKAMREENGLKYIEEAIEKLSKRHQYHIRAYDPKGGLDNTRRLTGFHETSNINDFSAGVANRGASIRIPRTGGQEKKGYFEDRRPSANCDPFAVTEALIRTCLLNETGDEPFQYKN</sequence>
<dbReference type="EC" id="6.3.1.2" evidence="2"/>
<dbReference type="EC" id="2.3.1.225" evidence="2"/>
<dbReference type="EMBL" id="Z29636">
    <property type="protein sequence ID" value="CAA82747.1"/>
    <property type="molecule type" value="mRNA"/>
</dbReference>
<dbReference type="PIR" id="S41452">
    <property type="entry name" value="S41452"/>
</dbReference>
<dbReference type="RefSeq" id="NP_999074.1">
    <property type="nucleotide sequence ID" value="NM_213909.1"/>
</dbReference>
<dbReference type="SMR" id="P46410"/>
<dbReference type="FunCoup" id="P46410">
    <property type="interactions" value="699"/>
</dbReference>
<dbReference type="STRING" id="9823.ENSSSCP00000042620"/>
<dbReference type="PaxDb" id="9823-ENSSSCP00000016481"/>
<dbReference type="PeptideAtlas" id="P46410"/>
<dbReference type="GeneID" id="396944"/>
<dbReference type="KEGG" id="ssc:396944"/>
<dbReference type="CTD" id="2752"/>
<dbReference type="eggNOG" id="KOG0683">
    <property type="taxonomic scope" value="Eukaryota"/>
</dbReference>
<dbReference type="InParanoid" id="P46410"/>
<dbReference type="OrthoDB" id="1936100at2759"/>
<dbReference type="BRENDA" id="6.3.1.2">
    <property type="organism ID" value="6170"/>
</dbReference>
<dbReference type="Proteomes" id="UP000008227">
    <property type="component" value="Unplaced"/>
</dbReference>
<dbReference type="Proteomes" id="UP000314985">
    <property type="component" value="Unplaced"/>
</dbReference>
<dbReference type="Proteomes" id="UP000694570">
    <property type="component" value="Unplaced"/>
</dbReference>
<dbReference type="Proteomes" id="UP000694571">
    <property type="component" value="Unplaced"/>
</dbReference>
<dbReference type="Proteomes" id="UP000694720">
    <property type="component" value="Unplaced"/>
</dbReference>
<dbReference type="Proteomes" id="UP000694722">
    <property type="component" value="Unplaced"/>
</dbReference>
<dbReference type="Proteomes" id="UP000694723">
    <property type="component" value="Unplaced"/>
</dbReference>
<dbReference type="Proteomes" id="UP000694724">
    <property type="component" value="Unplaced"/>
</dbReference>
<dbReference type="Proteomes" id="UP000694725">
    <property type="component" value="Unplaced"/>
</dbReference>
<dbReference type="Proteomes" id="UP000694726">
    <property type="component" value="Unplaced"/>
</dbReference>
<dbReference type="Proteomes" id="UP000694727">
    <property type="component" value="Unplaced"/>
</dbReference>
<dbReference type="Proteomes" id="UP000694728">
    <property type="component" value="Unplaced"/>
</dbReference>
<dbReference type="GO" id="GO:0005737">
    <property type="term" value="C:cytoplasm"/>
    <property type="evidence" value="ECO:0000318"/>
    <property type="project" value="GO_Central"/>
</dbReference>
<dbReference type="GO" id="GO:0005829">
    <property type="term" value="C:cytosol"/>
    <property type="evidence" value="ECO:0000250"/>
    <property type="project" value="UniProtKB"/>
</dbReference>
<dbReference type="GO" id="GO:0005783">
    <property type="term" value="C:endoplasmic reticulum"/>
    <property type="evidence" value="ECO:0007669"/>
    <property type="project" value="UniProtKB-KW"/>
</dbReference>
<dbReference type="GO" id="GO:0005739">
    <property type="term" value="C:mitochondrion"/>
    <property type="evidence" value="ECO:0007669"/>
    <property type="project" value="UniProtKB-SubCell"/>
</dbReference>
<dbReference type="GO" id="GO:0005886">
    <property type="term" value="C:plasma membrane"/>
    <property type="evidence" value="ECO:0000250"/>
    <property type="project" value="UniProtKB"/>
</dbReference>
<dbReference type="GO" id="GO:0005524">
    <property type="term" value="F:ATP binding"/>
    <property type="evidence" value="ECO:0007669"/>
    <property type="project" value="UniProtKB-KW"/>
</dbReference>
<dbReference type="GO" id="GO:0004356">
    <property type="term" value="F:glutamine synthetase activity"/>
    <property type="evidence" value="ECO:0000250"/>
    <property type="project" value="UniProtKB"/>
</dbReference>
<dbReference type="GO" id="GO:0046872">
    <property type="term" value="F:metal ion binding"/>
    <property type="evidence" value="ECO:0007669"/>
    <property type="project" value="UniProtKB-KW"/>
</dbReference>
<dbReference type="GO" id="GO:0019706">
    <property type="term" value="F:protein-cysteine S-palmitoyltransferase activity"/>
    <property type="evidence" value="ECO:0000250"/>
    <property type="project" value="UniProtKB"/>
</dbReference>
<dbReference type="GO" id="GO:0001525">
    <property type="term" value="P:angiogenesis"/>
    <property type="evidence" value="ECO:0007669"/>
    <property type="project" value="UniProtKB-KW"/>
</dbReference>
<dbReference type="GO" id="GO:0006542">
    <property type="term" value="P:glutamine biosynthetic process"/>
    <property type="evidence" value="ECO:0000318"/>
    <property type="project" value="GO_Central"/>
</dbReference>
<dbReference type="GO" id="GO:0097275">
    <property type="term" value="P:intracellular ammonium homeostasis"/>
    <property type="evidence" value="ECO:0000250"/>
    <property type="project" value="UniProtKB"/>
</dbReference>
<dbReference type="GO" id="GO:0045648">
    <property type="term" value="P:positive regulation of erythrocyte differentiation"/>
    <property type="evidence" value="ECO:0000250"/>
    <property type="project" value="UniProtKB"/>
</dbReference>
<dbReference type="GO" id="GO:0018345">
    <property type="term" value="P:protein palmitoylation"/>
    <property type="evidence" value="ECO:0000250"/>
    <property type="project" value="UniProtKB"/>
</dbReference>
<dbReference type="GO" id="GO:0010594">
    <property type="term" value="P:regulation of endothelial cell migration"/>
    <property type="evidence" value="ECO:0000250"/>
    <property type="project" value="UniProtKB"/>
</dbReference>
<dbReference type="GO" id="GO:1903670">
    <property type="term" value="P:regulation of sprouting angiogenesis"/>
    <property type="evidence" value="ECO:0000250"/>
    <property type="project" value="UniProtKB"/>
</dbReference>
<dbReference type="FunFam" id="3.10.20.70:FF:000004">
    <property type="entry name" value="Glutamine synthetase"/>
    <property type="match status" value="1"/>
</dbReference>
<dbReference type="FunFam" id="3.30.590.10:FF:000011">
    <property type="entry name" value="Glutamine synthetase"/>
    <property type="match status" value="1"/>
</dbReference>
<dbReference type="Gene3D" id="3.10.20.70">
    <property type="entry name" value="Glutamine synthetase, N-terminal domain"/>
    <property type="match status" value="1"/>
</dbReference>
<dbReference type="Gene3D" id="3.30.590.10">
    <property type="entry name" value="Glutamine synthetase/guanido kinase, catalytic domain"/>
    <property type="match status" value="1"/>
</dbReference>
<dbReference type="InterPro" id="IPR008147">
    <property type="entry name" value="Gln_synt_N"/>
</dbReference>
<dbReference type="InterPro" id="IPR036651">
    <property type="entry name" value="Gln_synt_N_sf"/>
</dbReference>
<dbReference type="InterPro" id="IPR014746">
    <property type="entry name" value="Gln_synth/guanido_kin_cat_dom"/>
</dbReference>
<dbReference type="InterPro" id="IPR008146">
    <property type="entry name" value="Gln_synth_cat_dom"/>
</dbReference>
<dbReference type="InterPro" id="IPR027303">
    <property type="entry name" value="Gln_synth_gly_rich_site"/>
</dbReference>
<dbReference type="InterPro" id="IPR027302">
    <property type="entry name" value="Gln_synth_N_conserv_site"/>
</dbReference>
<dbReference type="InterPro" id="IPR050292">
    <property type="entry name" value="Glutamine_Synthetase"/>
</dbReference>
<dbReference type="PANTHER" id="PTHR20852">
    <property type="entry name" value="GLUTAMINE SYNTHETASE"/>
    <property type="match status" value="1"/>
</dbReference>
<dbReference type="PANTHER" id="PTHR20852:SF45">
    <property type="entry name" value="GLUTAMINE SYNTHETASE"/>
    <property type="match status" value="1"/>
</dbReference>
<dbReference type="Pfam" id="PF00120">
    <property type="entry name" value="Gln-synt_C"/>
    <property type="match status" value="1"/>
</dbReference>
<dbReference type="Pfam" id="PF03951">
    <property type="entry name" value="Gln-synt_N"/>
    <property type="match status" value="1"/>
</dbReference>
<dbReference type="SMART" id="SM01230">
    <property type="entry name" value="Gln-synt_C"/>
    <property type="match status" value="1"/>
</dbReference>
<dbReference type="SUPFAM" id="SSF54368">
    <property type="entry name" value="Glutamine synthetase, N-terminal domain"/>
    <property type="match status" value="1"/>
</dbReference>
<dbReference type="SUPFAM" id="SSF55931">
    <property type="entry name" value="Glutamine synthetase/guanido kinase"/>
    <property type="match status" value="1"/>
</dbReference>
<dbReference type="PROSITE" id="PS00180">
    <property type="entry name" value="GLNA_1"/>
    <property type="match status" value="1"/>
</dbReference>
<dbReference type="PROSITE" id="PS00181">
    <property type="entry name" value="GLNA_ATP"/>
    <property type="match status" value="1"/>
</dbReference>
<dbReference type="PROSITE" id="PS51986">
    <property type="entry name" value="GS_BETA_GRASP"/>
    <property type="match status" value="1"/>
</dbReference>
<dbReference type="PROSITE" id="PS51987">
    <property type="entry name" value="GS_CATALYTIC"/>
    <property type="match status" value="1"/>
</dbReference>
<reference key="1">
    <citation type="submission" date="1994-01" db="EMBL/GenBank/DDBJ databases">
        <title>The cloning and nucleotide sequence of porcine glutamine synthetase cDNA.</title>
        <authorList>
            <person name="Johnstone R.W."/>
            <person name="Loveland B.E."/>
        </authorList>
    </citation>
    <scope>NUCLEOTIDE SEQUENCE [MRNA]</scope>
</reference>
<name>GLNA_PIG</name>
<protein>
    <recommendedName>
        <fullName evidence="7">Glutamine synthetase</fullName>
        <shortName evidence="7">GS</shortName>
        <ecNumber evidence="2">6.3.1.2</ecNumber>
    </recommendedName>
    <alternativeName>
        <fullName evidence="8">Glutamate--ammonia ligase</fullName>
    </alternativeName>
    <alternativeName>
        <fullName evidence="8">Palmitoyltransferase GLUL</fullName>
        <ecNumber evidence="2">2.3.1.225</ecNumber>
    </alternativeName>
</protein>
<gene>
    <name evidence="2" type="primary">GLUL</name>
    <name type="synonym">GLNS</name>
</gene>
<evidence type="ECO:0000250" key="1">
    <source>
        <dbReference type="UniProtKB" id="P09606"/>
    </source>
</evidence>
<evidence type="ECO:0000250" key="2">
    <source>
        <dbReference type="UniProtKB" id="P15104"/>
    </source>
</evidence>
<evidence type="ECO:0000250" key="3">
    <source>
        <dbReference type="UniProtKB" id="P15105"/>
    </source>
</evidence>
<evidence type="ECO:0000250" key="4">
    <source>
        <dbReference type="UniProtKB" id="P9WN39"/>
    </source>
</evidence>
<evidence type="ECO:0000255" key="5">
    <source>
        <dbReference type="PROSITE-ProRule" id="PRU01330"/>
    </source>
</evidence>
<evidence type="ECO:0000255" key="6">
    <source>
        <dbReference type="PROSITE-ProRule" id="PRU01331"/>
    </source>
</evidence>
<evidence type="ECO:0000303" key="7">
    <source ref="1"/>
</evidence>
<evidence type="ECO:0000305" key="8"/>
<organism>
    <name type="scientific">Sus scrofa</name>
    <name type="common">Pig</name>
    <dbReference type="NCBI Taxonomy" id="9823"/>
    <lineage>
        <taxon>Eukaryota</taxon>
        <taxon>Metazoa</taxon>
        <taxon>Chordata</taxon>
        <taxon>Craniata</taxon>
        <taxon>Vertebrata</taxon>
        <taxon>Euteleostomi</taxon>
        <taxon>Mammalia</taxon>
        <taxon>Eutheria</taxon>
        <taxon>Laurasiatheria</taxon>
        <taxon>Artiodactyla</taxon>
        <taxon>Suina</taxon>
        <taxon>Suidae</taxon>
        <taxon>Sus</taxon>
    </lineage>
</organism>
<comment type="function">
    <text evidence="2 3">Glutamine synthetase that catalyzes the ATP-dependent conversion of glutamate and ammonia to glutamine. Its role depends on tissue localization: in the brain, it regulates the levels of toxic ammonia and converts neurotoxic glutamate to harmless glutamine, whereas in the liver, it is one of the enzymes responsible for the removal of ammonia. Plays a key role in ammonium detoxification during erythropoiesis: the glutamine synthetase activity is required to remove ammonium generated by porphobilinogen deaminase (HMBS) during heme biosynthesis to prevent ammonium accumulation and oxidative stress (By similarity). Essential for proliferation of fetal skin fibroblasts (By similarity). Independently of its glutamine synthetase activity, required for endothelial cell migration during vascular development (By similarity). Involved in angiogenesis by regulating membrane localization and activation of the GTPase RHOJ, possibly by promoting RHOJ palmitoylation. May act as a palmitoyltransferase for RHOJ: able to autopalmitoylate and then transfer the palmitoyl group to RHOJ. Plays a role in ribosomal 40S subunit biogenesis. Through the interaction with BEST2, inhibits BEST2 channel activity by affecting the gating at the aperture in the absence of intracellular L-glutamate, but sensitizes BEST2 to intracellular L-glutamate, which promotes the opening of BEST2 and thus relieves its inhibitory effect on BEST2 (By similarity).</text>
</comment>
<comment type="catalytic activity">
    <reaction evidence="2">
        <text>L-glutamate + NH4(+) + ATP = L-glutamine + ADP + phosphate + H(+)</text>
        <dbReference type="Rhea" id="RHEA:16169"/>
        <dbReference type="ChEBI" id="CHEBI:15378"/>
        <dbReference type="ChEBI" id="CHEBI:28938"/>
        <dbReference type="ChEBI" id="CHEBI:29985"/>
        <dbReference type="ChEBI" id="CHEBI:30616"/>
        <dbReference type="ChEBI" id="CHEBI:43474"/>
        <dbReference type="ChEBI" id="CHEBI:58359"/>
        <dbReference type="ChEBI" id="CHEBI:456216"/>
        <dbReference type="EC" id="6.3.1.2"/>
    </reaction>
</comment>
<comment type="catalytic activity">
    <reaction evidence="2">
        <text>L-cysteinyl-[protein] + hexadecanoyl-CoA = S-hexadecanoyl-L-cysteinyl-[protein] + CoA</text>
        <dbReference type="Rhea" id="RHEA:36683"/>
        <dbReference type="Rhea" id="RHEA-COMP:10131"/>
        <dbReference type="Rhea" id="RHEA-COMP:11032"/>
        <dbReference type="ChEBI" id="CHEBI:29950"/>
        <dbReference type="ChEBI" id="CHEBI:57287"/>
        <dbReference type="ChEBI" id="CHEBI:57379"/>
        <dbReference type="ChEBI" id="CHEBI:74151"/>
        <dbReference type="EC" id="2.3.1.225"/>
    </reaction>
</comment>
<comment type="cofactor">
    <cofactor evidence="1">
        <name>Mg(2+)</name>
        <dbReference type="ChEBI" id="CHEBI:18420"/>
    </cofactor>
    <cofactor evidence="2">
        <name>Mn(2+)</name>
        <dbReference type="ChEBI" id="CHEBI:29035"/>
    </cofactor>
</comment>
<comment type="activity regulation">
    <text evidence="2">Glutamine synthetase activity is inhibited by methionine sulfoximine (MSO).</text>
</comment>
<comment type="subunit">
    <text evidence="2 3">Decamer; composed of two pentamers (By similarity). Interacts with PALMD (By similarity). Interacts with RHOJ (By similarity). Interacts with BEST2; this interaction tethers a fraction of GLUL to the membrane, causing a decrease of cytosolic glutamine synthase (GS) activity and inhibits the chloride channel activity of BEST2 by affecting the gating at the aperture in the absence of intracellular glutamate (By similarity).</text>
</comment>
<comment type="subcellular location">
    <subcellularLocation>
        <location evidence="2">Cytoplasm</location>
        <location evidence="2">Cytosol</location>
    </subcellularLocation>
    <subcellularLocation>
        <location evidence="1">Microsome</location>
    </subcellularLocation>
    <subcellularLocation>
        <location evidence="1">Mitochondrion</location>
    </subcellularLocation>
    <subcellularLocation>
        <location evidence="2">Cell membrane</location>
        <topology evidence="2">Lipid-anchor</topology>
    </subcellularLocation>
    <text evidence="2">Mainly localizes in the cytosol, with a fraction associated with the cell membrane.</text>
</comment>
<comment type="PTM">
    <text evidence="2">Palmitoylated; undergoes autopalmitoylation.</text>
</comment>
<comment type="PTM">
    <text evidence="2">Acetylated by EP300/p300; acetylation is stimulated by increased glutamine levels and promotes ubiquitin-mediated proteasomal degradation.</text>
</comment>
<comment type="PTM">
    <text evidence="2 3">Ubiquitinated by ZNRF1 (By similarity). Ubiquitinated by the DCX (DDB1-CUL4-X-box) E3 ubiquitin-protein ligase complex called CRL4(CRBN), leading to proteasomal degradation (By similarity).</text>
</comment>
<comment type="similarity">
    <text evidence="8">Belongs to the glutamine synthetase family.</text>
</comment>
<feature type="initiator methionine" description="Removed" evidence="3">
    <location>
        <position position="1"/>
    </location>
</feature>
<feature type="chain" id="PRO_0000153142" description="Glutamine synthetase">
    <location>
        <begin position="2"/>
        <end position="373"/>
    </location>
</feature>
<feature type="domain" description="GS beta-grasp" evidence="5">
    <location>
        <begin position="24"/>
        <end position="106"/>
    </location>
</feature>
<feature type="domain" description="GS catalytic" evidence="6">
    <location>
        <begin position="113"/>
        <end position="373"/>
    </location>
</feature>
<feature type="region of interest" description="Required for glutamine-induced ubiquitination by CRL4(CRBN) and proteasomal degradation" evidence="2">
    <location>
        <begin position="2"/>
        <end position="25"/>
    </location>
</feature>
<feature type="binding site" evidence="2">
    <location>
        <position position="134"/>
    </location>
    <ligand>
        <name>ATP</name>
        <dbReference type="ChEBI" id="CHEBI:30616"/>
    </ligand>
</feature>
<feature type="binding site" evidence="2">
    <location>
        <position position="134"/>
    </location>
    <ligand>
        <name>Mn(2+)</name>
        <dbReference type="ChEBI" id="CHEBI:29035"/>
        <label>1</label>
    </ligand>
</feature>
<feature type="binding site" evidence="2">
    <location>
        <position position="136"/>
    </location>
    <ligand>
        <name>Mn(2+)</name>
        <dbReference type="ChEBI" id="CHEBI:29035"/>
        <label>2</label>
    </ligand>
</feature>
<feature type="binding site" evidence="2">
    <location>
        <position position="196"/>
    </location>
    <ligand>
        <name>Mn(2+)</name>
        <dbReference type="ChEBI" id="CHEBI:29035"/>
        <label>2</label>
    </ligand>
</feature>
<feature type="binding site" evidence="2">
    <location>
        <begin position="203"/>
        <end position="208"/>
    </location>
    <ligand>
        <name>ATP</name>
        <dbReference type="ChEBI" id="CHEBI:30616"/>
    </ligand>
</feature>
<feature type="binding site" evidence="2">
    <location>
        <position position="203"/>
    </location>
    <ligand>
        <name>Mn(2+)</name>
        <dbReference type="ChEBI" id="CHEBI:29035"/>
        <label>2</label>
    </ligand>
</feature>
<feature type="binding site" evidence="4">
    <location>
        <begin position="246"/>
        <end position="247"/>
    </location>
    <ligand>
        <name>L-glutamate</name>
        <dbReference type="ChEBI" id="CHEBI:29985"/>
    </ligand>
</feature>
<feature type="binding site" evidence="2">
    <location>
        <position position="253"/>
    </location>
    <ligand>
        <name>Mn(2+)</name>
        <dbReference type="ChEBI" id="CHEBI:29035"/>
        <label>1</label>
    </ligand>
</feature>
<feature type="binding site" evidence="2">
    <location>
        <begin position="255"/>
        <end position="257"/>
    </location>
    <ligand>
        <name>ATP</name>
        <dbReference type="ChEBI" id="CHEBI:30616"/>
    </ligand>
</feature>
<feature type="binding site" evidence="2">
    <location>
        <position position="319"/>
    </location>
    <ligand>
        <name>ATP</name>
        <dbReference type="ChEBI" id="CHEBI:30616"/>
    </ligand>
</feature>
<feature type="binding site" evidence="4">
    <location>
        <position position="319"/>
    </location>
    <ligand>
        <name>L-glutamate</name>
        <dbReference type="ChEBI" id="CHEBI:29985"/>
    </ligand>
</feature>
<feature type="binding site" evidence="2">
    <location>
        <position position="324"/>
    </location>
    <ligand>
        <name>ATP</name>
        <dbReference type="ChEBI" id="CHEBI:30616"/>
    </ligand>
</feature>
<feature type="binding site" evidence="2">
    <location>
        <begin position="336"/>
        <end position="338"/>
    </location>
    <ligand>
        <name>ADP</name>
        <dbReference type="ChEBI" id="CHEBI:456216"/>
    </ligand>
</feature>
<feature type="binding site" evidence="2">
    <location>
        <position position="338"/>
    </location>
    <ligand>
        <name>Mn(2+)</name>
        <dbReference type="ChEBI" id="CHEBI:29035"/>
        <label>1</label>
    </ligand>
</feature>
<feature type="binding site" evidence="4">
    <location>
        <position position="340"/>
    </location>
    <ligand>
        <name>L-glutamate</name>
        <dbReference type="ChEBI" id="CHEBI:29985"/>
    </ligand>
</feature>
<feature type="modified residue" description="N-acetylalanine" evidence="3">
    <location>
        <position position="2"/>
    </location>
</feature>
<feature type="modified residue" description="N6-acetyllysine" evidence="2">
    <location>
        <position position="11"/>
    </location>
</feature>
<feature type="modified residue" description="N6-acetyllysine" evidence="2">
    <location>
        <position position="14"/>
    </location>
</feature>
<feature type="modified residue" description="Phosphotyrosine" evidence="3">
    <location>
        <position position="104"/>
    </location>
</feature>
<feature type="modified residue" description="Phosphoserine" evidence="2">
    <location>
        <position position="343"/>
    </location>
</feature>
<proteinExistence type="evidence at transcript level"/>